<keyword id="KW-0997">Cell inner membrane</keyword>
<keyword id="KW-1003">Cell membrane</keyword>
<keyword id="KW-0472">Membrane</keyword>
<keyword id="KW-1185">Reference proteome</keyword>
<keyword id="KW-0677">Repeat</keyword>
<keyword id="KW-0812">Transmembrane</keyword>
<keyword id="KW-1133">Transmembrane helix</keyword>
<keyword id="KW-0813">Transport</keyword>
<sequence length="281" mass="29780">MSQTSTLKGQCIAEFLGTGLLIFFGVGCVAALKVAGASFGQWEISVIWGLGVAMAIYLTAGVSGAHLNPAVTIALWLFACFDKRKVIPFIVSQVAGAFCAAALVYGLYYNLFFDFEQTHHIVRGSVESVDLAGTFSTYPNPHINFVQAFAVEMVITAILMGLILALTDDGNGVPRGPLAPLLIGLLIAVIGASMGPLTGFAMNPARDFGPKVFAWLAGWGNVAFTGGRDIPYFLVPLFGPIVGAIVGAFAYRKLIGRHLPCDICVVEEKETTTPSEQKASL</sequence>
<protein>
    <recommendedName>
        <fullName evidence="1">Glycerol uptake facilitator protein</fullName>
    </recommendedName>
    <alternativeName>
        <fullName>Aquaglyceroporin</fullName>
    </alternativeName>
</protein>
<feature type="chain" id="PRO_0000064081" description="Glycerol uptake facilitator protein">
    <location>
        <begin position="1"/>
        <end position="281"/>
    </location>
</feature>
<feature type="topological domain" description="Cytoplasmic" evidence="1">
    <location>
        <begin position="1"/>
        <end position="5"/>
    </location>
</feature>
<feature type="transmembrane region" description="Helical; Name=M1" evidence="1">
    <location>
        <begin position="6"/>
        <end position="34"/>
    </location>
</feature>
<feature type="topological domain" description="Periplasmic" evidence="1">
    <location>
        <begin position="35"/>
        <end position="39"/>
    </location>
</feature>
<feature type="transmembrane region" description="Helical; Name=M2" evidence="1">
    <location>
        <begin position="40"/>
        <end position="60"/>
    </location>
</feature>
<feature type="topological domain" description="Cytoplasmic" evidence="1">
    <location>
        <begin position="61"/>
        <end position="63"/>
    </location>
</feature>
<feature type="intramembrane region" evidence="1">
    <location>
        <begin position="64"/>
        <end position="67"/>
    </location>
</feature>
<feature type="intramembrane region" description="Helical; Name=M3" evidence="1">
    <location>
        <begin position="68"/>
        <end position="78"/>
    </location>
</feature>
<feature type="topological domain" description="Cytoplasmic" evidence="1">
    <location>
        <begin position="79"/>
        <end position="84"/>
    </location>
</feature>
<feature type="transmembrane region" description="Helical; Name=M4" evidence="1">
    <location>
        <begin position="85"/>
        <end position="108"/>
    </location>
</feature>
<feature type="topological domain" description="Periplasmic" evidence="1">
    <location>
        <begin position="109"/>
        <end position="143"/>
    </location>
</feature>
<feature type="transmembrane region" description="Helical; Name=M5" evidence="1">
    <location>
        <begin position="144"/>
        <end position="169"/>
    </location>
</feature>
<feature type="topological domain" description="Cytoplasmic" evidence="1">
    <location>
        <begin position="170"/>
        <end position="177"/>
    </location>
</feature>
<feature type="transmembrane region" description="Helical; Name=M6" evidence="1">
    <location>
        <begin position="178"/>
        <end position="194"/>
    </location>
</feature>
<feature type="topological domain" description="Periplasmic" evidence="1">
    <location>
        <begin position="195"/>
        <end position="198"/>
    </location>
</feature>
<feature type="intramembrane region" evidence="1">
    <location>
        <begin position="199"/>
        <end position="202"/>
    </location>
</feature>
<feature type="intramembrane region" description="Helical; Name=M7" evidence="1">
    <location>
        <begin position="203"/>
        <end position="216"/>
    </location>
</feature>
<feature type="topological domain" description="Periplasmic" evidence="1">
    <location>
        <begin position="217"/>
        <end position="231"/>
    </location>
</feature>
<feature type="transmembrane region" description="Helical; Name=M8" evidence="1">
    <location>
        <begin position="232"/>
        <end position="254"/>
    </location>
</feature>
<feature type="topological domain" description="Cytoplasmic" evidence="1">
    <location>
        <begin position="255"/>
        <end position="281"/>
    </location>
</feature>
<feature type="short sequence motif" description="NPA 1" evidence="2">
    <location>
        <begin position="68"/>
        <end position="70"/>
    </location>
</feature>
<feature type="short sequence motif" description="NPA 2" evidence="2">
    <location>
        <begin position="203"/>
        <end position="205"/>
    </location>
</feature>
<feature type="site" description="Substrate discrimination" evidence="1">
    <location>
        <position position="48"/>
    </location>
</feature>
<feature type="site" description="Substrate discrimination" evidence="1">
    <location>
        <position position="200"/>
    </location>
</feature>
<feature type="site" description="Substrate discrimination" evidence="1">
    <location>
        <position position="206"/>
    </location>
</feature>
<name>GLPF_ECO57</name>
<evidence type="ECO:0000250" key="1">
    <source>
        <dbReference type="UniProtKB" id="P0AER0"/>
    </source>
</evidence>
<evidence type="ECO:0000305" key="2"/>
<reference key="1">
    <citation type="journal article" date="2001" name="Nature">
        <title>Genome sequence of enterohaemorrhagic Escherichia coli O157:H7.</title>
        <authorList>
            <person name="Perna N.T."/>
            <person name="Plunkett G. III"/>
            <person name="Burland V."/>
            <person name="Mau B."/>
            <person name="Glasner J.D."/>
            <person name="Rose D.J."/>
            <person name="Mayhew G.F."/>
            <person name="Evans P.S."/>
            <person name="Gregor J."/>
            <person name="Kirkpatrick H.A."/>
            <person name="Posfai G."/>
            <person name="Hackett J."/>
            <person name="Klink S."/>
            <person name="Boutin A."/>
            <person name="Shao Y."/>
            <person name="Miller L."/>
            <person name="Grotbeck E.J."/>
            <person name="Davis N.W."/>
            <person name="Lim A."/>
            <person name="Dimalanta E.T."/>
            <person name="Potamousis K."/>
            <person name="Apodaca J."/>
            <person name="Anantharaman T.S."/>
            <person name="Lin J."/>
            <person name="Yen G."/>
            <person name="Schwartz D.C."/>
            <person name="Welch R.A."/>
            <person name="Blattner F.R."/>
        </authorList>
    </citation>
    <scope>NUCLEOTIDE SEQUENCE [LARGE SCALE GENOMIC DNA]</scope>
    <source>
        <strain>O157:H7 / EDL933 / ATCC 700927 / EHEC</strain>
    </source>
</reference>
<reference key="2">
    <citation type="journal article" date="2001" name="DNA Res.">
        <title>Complete genome sequence of enterohemorrhagic Escherichia coli O157:H7 and genomic comparison with a laboratory strain K-12.</title>
        <authorList>
            <person name="Hayashi T."/>
            <person name="Makino K."/>
            <person name="Ohnishi M."/>
            <person name="Kurokawa K."/>
            <person name="Ishii K."/>
            <person name="Yokoyama K."/>
            <person name="Han C.-G."/>
            <person name="Ohtsubo E."/>
            <person name="Nakayama K."/>
            <person name="Murata T."/>
            <person name="Tanaka M."/>
            <person name="Tobe T."/>
            <person name="Iida T."/>
            <person name="Takami H."/>
            <person name="Honda T."/>
            <person name="Sasakawa C."/>
            <person name="Ogasawara N."/>
            <person name="Yasunaga T."/>
            <person name="Kuhara S."/>
            <person name="Shiba T."/>
            <person name="Hattori M."/>
            <person name="Shinagawa H."/>
        </authorList>
    </citation>
    <scope>NUCLEOTIDE SEQUENCE [LARGE SCALE GENOMIC DNA]</scope>
    <source>
        <strain>O157:H7 / Sakai / RIMD 0509952 / EHEC</strain>
    </source>
</reference>
<comment type="function">
    <text evidence="1">Mediates glycerol diffusion across the cytoplasmic membrane via a pore-type mechanism.</text>
</comment>
<comment type="catalytic activity">
    <reaction evidence="1">
        <text>glycerol(in) = glycerol(out)</text>
        <dbReference type="Rhea" id="RHEA:29675"/>
        <dbReference type="ChEBI" id="CHEBI:17754"/>
    </reaction>
</comment>
<comment type="subunit">
    <text evidence="1">Homotetramer.</text>
</comment>
<comment type="subcellular location">
    <subcellularLocation>
        <location evidence="1">Cell inner membrane</location>
        <topology evidence="1">Multi-pass membrane protein</topology>
    </subcellularLocation>
</comment>
<comment type="domain">
    <text evidence="2">Aquaporins contain two tandem repeats each containing three membrane-spanning domains and a pore-forming loop with the signature motif Asn-Pro-Ala (NPA).</text>
</comment>
<comment type="similarity">
    <text evidence="2">Belongs to the MIP/aquaporin (TC 1.A.8) family.</text>
</comment>
<accession>P0AER2</accession>
<accession>P11244</accession>
<accession>Q46727</accession>
<dbReference type="EMBL" id="AE005174">
    <property type="protein sequence ID" value="AAG59120.1"/>
    <property type="molecule type" value="Genomic_DNA"/>
</dbReference>
<dbReference type="EMBL" id="BA000007">
    <property type="protein sequence ID" value="BAB38275.1"/>
    <property type="molecule type" value="Genomic_DNA"/>
</dbReference>
<dbReference type="PIR" id="D86082">
    <property type="entry name" value="D86082"/>
</dbReference>
<dbReference type="PIR" id="D91235">
    <property type="entry name" value="D91235"/>
</dbReference>
<dbReference type="RefSeq" id="NP_312879.1">
    <property type="nucleotide sequence ID" value="NC_002695.1"/>
</dbReference>
<dbReference type="RefSeq" id="WP_000084268.1">
    <property type="nucleotide sequence ID" value="NZ_VOAI01000016.1"/>
</dbReference>
<dbReference type="SMR" id="P0AER2"/>
<dbReference type="STRING" id="155864.Z5472"/>
<dbReference type="GeneID" id="915039"/>
<dbReference type="GeneID" id="93777971"/>
<dbReference type="KEGG" id="ece:Z5472"/>
<dbReference type="KEGG" id="ecs:ECs_4852"/>
<dbReference type="PATRIC" id="fig|386585.9.peg.5074"/>
<dbReference type="eggNOG" id="COG0580">
    <property type="taxonomic scope" value="Bacteria"/>
</dbReference>
<dbReference type="HOGENOM" id="CLU_020019_9_3_6"/>
<dbReference type="OMA" id="WGFAVLT"/>
<dbReference type="Proteomes" id="UP000000558">
    <property type="component" value="Chromosome"/>
</dbReference>
<dbReference type="Proteomes" id="UP000002519">
    <property type="component" value="Chromosome"/>
</dbReference>
<dbReference type="GO" id="GO:0005886">
    <property type="term" value="C:plasma membrane"/>
    <property type="evidence" value="ECO:0007669"/>
    <property type="project" value="UniProtKB-SubCell"/>
</dbReference>
<dbReference type="GO" id="GO:0015254">
    <property type="term" value="F:glycerol channel activity"/>
    <property type="evidence" value="ECO:0007669"/>
    <property type="project" value="TreeGrafter"/>
</dbReference>
<dbReference type="CDD" id="cd00333">
    <property type="entry name" value="MIP"/>
    <property type="match status" value="1"/>
</dbReference>
<dbReference type="FunFam" id="1.20.1080.10:FF:000004">
    <property type="entry name" value="Glycerol facilitator"/>
    <property type="match status" value="1"/>
</dbReference>
<dbReference type="Gene3D" id="1.20.1080.10">
    <property type="entry name" value="Glycerol uptake facilitator protein"/>
    <property type="match status" value="1"/>
</dbReference>
<dbReference type="InterPro" id="IPR023271">
    <property type="entry name" value="Aquaporin-like"/>
</dbReference>
<dbReference type="InterPro" id="IPR000425">
    <property type="entry name" value="MIP"/>
</dbReference>
<dbReference type="InterPro" id="IPR050363">
    <property type="entry name" value="MIP/Aquaporin"/>
</dbReference>
<dbReference type="InterPro" id="IPR022357">
    <property type="entry name" value="MIP_CS"/>
</dbReference>
<dbReference type="NCBIfam" id="TIGR00861">
    <property type="entry name" value="MIP"/>
    <property type="match status" value="1"/>
</dbReference>
<dbReference type="PANTHER" id="PTHR43829">
    <property type="entry name" value="AQUAPORIN OR AQUAGLYCEROPORIN RELATED"/>
    <property type="match status" value="1"/>
</dbReference>
<dbReference type="PANTHER" id="PTHR43829:SF9">
    <property type="entry name" value="AQUAPORIN-9"/>
    <property type="match status" value="1"/>
</dbReference>
<dbReference type="Pfam" id="PF00230">
    <property type="entry name" value="MIP"/>
    <property type="match status" value="1"/>
</dbReference>
<dbReference type="PRINTS" id="PR00783">
    <property type="entry name" value="MINTRINSICP"/>
</dbReference>
<dbReference type="SUPFAM" id="SSF81338">
    <property type="entry name" value="Aquaporin-like"/>
    <property type="match status" value="1"/>
</dbReference>
<dbReference type="PROSITE" id="PS00221">
    <property type="entry name" value="MIP"/>
    <property type="match status" value="1"/>
</dbReference>
<organism>
    <name type="scientific">Escherichia coli O157:H7</name>
    <dbReference type="NCBI Taxonomy" id="83334"/>
    <lineage>
        <taxon>Bacteria</taxon>
        <taxon>Pseudomonadati</taxon>
        <taxon>Pseudomonadota</taxon>
        <taxon>Gammaproteobacteria</taxon>
        <taxon>Enterobacterales</taxon>
        <taxon>Enterobacteriaceae</taxon>
        <taxon>Escherichia</taxon>
    </lineage>
</organism>
<gene>
    <name type="primary">glpF</name>
    <name type="ordered locus">Z5472</name>
    <name type="ordered locus">ECs4852</name>
</gene>
<proteinExistence type="inferred from homology"/>